<organism>
    <name type="scientific">Homo sapiens</name>
    <name type="common">Human</name>
    <dbReference type="NCBI Taxonomy" id="9606"/>
    <lineage>
        <taxon>Eukaryota</taxon>
        <taxon>Metazoa</taxon>
        <taxon>Chordata</taxon>
        <taxon>Craniata</taxon>
        <taxon>Vertebrata</taxon>
        <taxon>Euteleostomi</taxon>
        <taxon>Mammalia</taxon>
        <taxon>Eutheria</taxon>
        <taxon>Euarchontoglires</taxon>
        <taxon>Primates</taxon>
        <taxon>Haplorrhini</taxon>
        <taxon>Catarrhini</taxon>
        <taxon>Hominidae</taxon>
        <taxon>Homo</taxon>
    </lineage>
</organism>
<dbReference type="EMBL" id="U28488">
    <property type="protein sequence ID" value="AAC50374.1"/>
    <property type="molecule type" value="mRNA"/>
</dbReference>
<dbReference type="EMBL" id="Z73157">
    <property type="protein sequence ID" value="CAA97504.1"/>
    <property type="molecule type" value="mRNA"/>
</dbReference>
<dbReference type="EMBL" id="U62027">
    <property type="protein sequence ID" value="AAC50657.1"/>
    <property type="molecule type" value="mRNA"/>
</dbReference>
<dbReference type="EMBL" id="AB065870">
    <property type="protein sequence ID" value="BAC06088.1"/>
    <property type="molecule type" value="Genomic_DNA"/>
</dbReference>
<dbReference type="EMBL" id="AY268431">
    <property type="protein sequence ID" value="AAP23198.1"/>
    <property type="molecule type" value="Genomic_DNA"/>
</dbReference>
<dbReference type="EMBL" id="AY455929">
    <property type="protein sequence ID" value="AAR13862.1"/>
    <property type="molecule type" value="Genomic_DNA"/>
</dbReference>
<dbReference type="EMBL" id="BC020742">
    <property type="protein sequence ID" value="AAH20742.1"/>
    <property type="molecule type" value="mRNA"/>
</dbReference>
<dbReference type="CCDS" id="CCDS8588.1"/>
<dbReference type="PIR" id="S65766">
    <property type="entry name" value="S65766"/>
</dbReference>
<dbReference type="RefSeq" id="NP_001313404.1">
    <property type="nucleotide sequence ID" value="NM_001326475.2"/>
</dbReference>
<dbReference type="RefSeq" id="NP_001313406.1">
    <property type="nucleotide sequence ID" value="NM_001326477.2"/>
</dbReference>
<dbReference type="RefSeq" id="NP_004045.1">
    <property type="nucleotide sequence ID" value="NM_004054.4"/>
</dbReference>
<dbReference type="PDB" id="8HK2">
    <property type="method" value="EM"/>
    <property type="resolution" value="2.90 A"/>
    <property type="chains" value="A=1-476"/>
</dbReference>
<dbReference type="PDB" id="8HK3">
    <property type="method" value="EM"/>
    <property type="resolution" value="3.20 A"/>
    <property type="chains" value="C=1-476"/>
</dbReference>
<dbReference type="PDB" id="8I95">
    <property type="method" value="EM"/>
    <property type="resolution" value="2.88 A"/>
    <property type="chains" value="C=2-482"/>
</dbReference>
<dbReference type="PDB" id="8I97">
    <property type="method" value="EM"/>
    <property type="resolution" value="3.19 A"/>
    <property type="chains" value="C=2-482"/>
</dbReference>
<dbReference type="PDB" id="8I9A">
    <property type="method" value="EM"/>
    <property type="resolution" value="3.57 A"/>
    <property type="chains" value="C=2-482"/>
</dbReference>
<dbReference type="PDB" id="8I9L">
    <property type="method" value="EM"/>
    <property type="resolution" value="3.18 A"/>
    <property type="chains" value="C=2-482"/>
</dbReference>
<dbReference type="PDB" id="8I9S">
    <property type="method" value="EM"/>
    <property type="resolution" value="3.26 A"/>
    <property type="chains" value="C=2-482"/>
</dbReference>
<dbReference type="PDB" id="8IA8">
    <property type="method" value="EM"/>
    <property type="resolution" value="2.86 A"/>
    <property type="chains" value="A=1-482"/>
</dbReference>
<dbReference type="PDB" id="8J6D">
    <property type="method" value="EM"/>
    <property type="resolution" value="3.10 A"/>
    <property type="chains" value="C=2-482"/>
</dbReference>
<dbReference type="PDB" id="8JA3">
    <property type="method" value="EM"/>
    <property type="resolution" value="3.94 A"/>
    <property type="chains" value="U/V=459-468"/>
</dbReference>
<dbReference type="PDBsum" id="8HK2"/>
<dbReference type="PDBsum" id="8HK3"/>
<dbReference type="PDBsum" id="8I95"/>
<dbReference type="PDBsum" id="8I97"/>
<dbReference type="PDBsum" id="8I9A"/>
<dbReference type="PDBsum" id="8I9L"/>
<dbReference type="PDBsum" id="8I9S"/>
<dbReference type="PDBsum" id="8IA8"/>
<dbReference type="PDBsum" id="8J6D"/>
<dbReference type="PDBsum" id="8JA3"/>
<dbReference type="EMDB" id="EMD-34842"/>
<dbReference type="EMDB" id="EMD-34843"/>
<dbReference type="EMDB" id="EMD-35257"/>
<dbReference type="EMDB" id="EMD-35259"/>
<dbReference type="EMDB" id="EMD-35263"/>
<dbReference type="EMDB" id="EMD-35275"/>
<dbReference type="EMDB" id="EMD-35282"/>
<dbReference type="EMDB" id="EMD-35298"/>
<dbReference type="EMDB" id="EMD-36001"/>
<dbReference type="EMDB" id="EMD-36124"/>
<dbReference type="SMR" id="Q16581"/>
<dbReference type="BioGRID" id="107180">
    <property type="interactions" value="124"/>
</dbReference>
<dbReference type="FunCoup" id="Q16581">
    <property type="interactions" value="576"/>
</dbReference>
<dbReference type="IntAct" id="Q16581">
    <property type="interactions" value="96"/>
</dbReference>
<dbReference type="STRING" id="9606.ENSP00000302079"/>
<dbReference type="BindingDB" id="Q16581"/>
<dbReference type="ChEMBL" id="CHEMBL4761"/>
<dbReference type="GuidetoPHARMACOLOGY" id="31"/>
<dbReference type="GlyConnect" id="811">
    <property type="glycosylation" value="1 O-Linked glycan (1 site)"/>
</dbReference>
<dbReference type="GlyCosmos" id="Q16581">
    <property type="glycosylation" value="5 sites, 2 glycans"/>
</dbReference>
<dbReference type="GlyGen" id="Q16581">
    <property type="glycosylation" value="5 sites, 2 O-linked glycans (3 sites)"/>
</dbReference>
<dbReference type="iPTMnet" id="Q16581"/>
<dbReference type="PhosphoSitePlus" id="Q16581"/>
<dbReference type="BioMuta" id="C3AR1"/>
<dbReference type="DMDM" id="37538305"/>
<dbReference type="CPTAC" id="CPTAC-1177"/>
<dbReference type="MassIVE" id="Q16581"/>
<dbReference type="PaxDb" id="9606-ENSP00000302079"/>
<dbReference type="PeptideAtlas" id="Q16581"/>
<dbReference type="ProteomicsDB" id="60928"/>
<dbReference type="ABCD" id="Q16581">
    <property type="antibodies" value="16 sequenced antibodies"/>
</dbReference>
<dbReference type="Antibodypedia" id="3999">
    <property type="antibodies" value="571 antibodies from 35 providers"/>
</dbReference>
<dbReference type="DNASU" id="719"/>
<dbReference type="Ensembl" id="ENST00000307637.5">
    <property type="protein sequence ID" value="ENSP00000302079.4"/>
    <property type="gene ID" value="ENSG00000171860.5"/>
</dbReference>
<dbReference type="GeneID" id="719"/>
<dbReference type="KEGG" id="hsa:719"/>
<dbReference type="MANE-Select" id="ENST00000307637.5">
    <property type="protein sequence ID" value="ENSP00000302079.4"/>
    <property type="RefSeq nucleotide sequence ID" value="NM_004054.4"/>
    <property type="RefSeq protein sequence ID" value="NP_004045.1"/>
</dbReference>
<dbReference type="UCSC" id="uc001qtv.2">
    <property type="organism name" value="human"/>
</dbReference>
<dbReference type="AGR" id="HGNC:1319"/>
<dbReference type="CTD" id="719"/>
<dbReference type="DisGeNET" id="719"/>
<dbReference type="GeneCards" id="C3AR1"/>
<dbReference type="HGNC" id="HGNC:1319">
    <property type="gene designation" value="C3AR1"/>
</dbReference>
<dbReference type="HPA" id="ENSG00000171860">
    <property type="expression patterns" value="Tissue enhanced (lymphoid)"/>
</dbReference>
<dbReference type="MalaCards" id="C3AR1"/>
<dbReference type="MIM" id="605246">
    <property type="type" value="gene"/>
</dbReference>
<dbReference type="neXtProt" id="NX_Q16581"/>
<dbReference type="OpenTargets" id="ENSG00000171860"/>
<dbReference type="PharmGKB" id="PA25898"/>
<dbReference type="VEuPathDB" id="HostDB:ENSG00000171860"/>
<dbReference type="eggNOG" id="ENOG502R35Z">
    <property type="taxonomic scope" value="Eukaryota"/>
</dbReference>
<dbReference type="GeneTree" id="ENSGT01130000278339"/>
<dbReference type="HOGENOM" id="CLU_009579_35_0_1"/>
<dbReference type="InParanoid" id="Q16581"/>
<dbReference type="OMA" id="MCGYNFG"/>
<dbReference type="OrthoDB" id="10037617at2759"/>
<dbReference type="PAN-GO" id="Q16581">
    <property type="GO annotations" value="7 GO annotations based on evolutionary models"/>
</dbReference>
<dbReference type="PhylomeDB" id="Q16581"/>
<dbReference type="TreeFam" id="TF330976"/>
<dbReference type="PathwayCommons" id="Q16581"/>
<dbReference type="Reactome" id="R-HSA-375276">
    <property type="pathway name" value="Peptide ligand-binding receptors"/>
</dbReference>
<dbReference type="Reactome" id="R-HSA-418594">
    <property type="pathway name" value="G alpha (i) signalling events"/>
</dbReference>
<dbReference type="Reactome" id="R-HSA-6798695">
    <property type="pathway name" value="Neutrophil degranulation"/>
</dbReference>
<dbReference type="Reactome" id="R-HSA-9660826">
    <property type="pathway name" value="Purinergic signaling in leishmaniasis infection"/>
</dbReference>
<dbReference type="Reactome" id="R-HSA-977606">
    <property type="pathway name" value="Regulation of Complement cascade"/>
</dbReference>
<dbReference type="SignaLink" id="Q16581"/>
<dbReference type="SIGNOR" id="Q16581"/>
<dbReference type="BioGRID-ORCS" id="719">
    <property type="hits" value="8 hits in 1159 CRISPR screens"/>
</dbReference>
<dbReference type="ChiTaRS" id="C3AR1">
    <property type="organism name" value="human"/>
</dbReference>
<dbReference type="GeneWiki" id="C3a_receptor"/>
<dbReference type="GenomeRNAi" id="719"/>
<dbReference type="Pharos" id="Q16581">
    <property type="development level" value="Tchem"/>
</dbReference>
<dbReference type="PRO" id="PR:Q16581"/>
<dbReference type="Proteomes" id="UP000005640">
    <property type="component" value="Chromosome 12"/>
</dbReference>
<dbReference type="RNAct" id="Q16581">
    <property type="molecule type" value="protein"/>
</dbReference>
<dbReference type="Bgee" id="ENSG00000171860">
    <property type="expression patterns" value="Expressed in monocyte and 180 other cell types or tissues"/>
</dbReference>
<dbReference type="ExpressionAtlas" id="Q16581">
    <property type="expression patterns" value="baseline and differential"/>
</dbReference>
<dbReference type="GO" id="GO:0035577">
    <property type="term" value="C:azurophil granule membrane"/>
    <property type="evidence" value="ECO:0000304"/>
    <property type="project" value="Reactome"/>
</dbReference>
<dbReference type="GO" id="GO:0005886">
    <property type="term" value="C:plasma membrane"/>
    <property type="evidence" value="ECO:0000318"/>
    <property type="project" value="GO_Central"/>
</dbReference>
<dbReference type="GO" id="GO:0035579">
    <property type="term" value="C:specific granule membrane"/>
    <property type="evidence" value="ECO:0000304"/>
    <property type="project" value="Reactome"/>
</dbReference>
<dbReference type="GO" id="GO:0004876">
    <property type="term" value="F:complement component C3a receptor activity"/>
    <property type="evidence" value="ECO:0000314"/>
    <property type="project" value="UniProtKB"/>
</dbReference>
<dbReference type="GO" id="GO:0004878">
    <property type="term" value="F:complement component C5a receptor activity"/>
    <property type="evidence" value="ECO:0000318"/>
    <property type="project" value="GO_Central"/>
</dbReference>
<dbReference type="GO" id="GO:0004930">
    <property type="term" value="F:G protein-coupled receptor activity"/>
    <property type="evidence" value="ECO:0000353"/>
    <property type="project" value="UniProtKB"/>
</dbReference>
<dbReference type="GO" id="GO:0008015">
    <property type="term" value="P:blood circulation"/>
    <property type="evidence" value="ECO:0000304"/>
    <property type="project" value="ProtInc"/>
</dbReference>
<dbReference type="GO" id="GO:0019722">
    <property type="term" value="P:calcium-mediated signaling"/>
    <property type="evidence" value="ECO:0000314"/>
    <property type="project" value="UniProtKB"/>
</dbReference>
<dbReference type="GO" id="GO:0006935">
    <property type="term" value="P:chemotaxis"/>
    <property type="evidence" value="ECO:0007669"/>
    <property type="project" value="UniProtKB-KW"/>
</dbReference>
<dbReference type="GO" id="GO:0002430">
    <property type="term" value="P:complement receptor mediated signaling pathway"/>
    <property type="evidence" value="ECO:0000314"/>
    <property type="project" value="UniProtKB"/>
</dbReference>
<dbReference type="GO" id="GO:0007186">
    <property type="term" value="P:G protein-coupled receptor signaling pathway"/>
    <property type="evidence" value="ECO:0000304"/>
    <property type="project" value="ProtInc"/>
</dbReference>
<dbReference type="GO" id="GO:0006954">
    <property type="term" value="P:inflammatory response"/>
    <property type="evidence" value="ECO:0000318"/>
    <property type="project" value="GO_Central"/>
</dbReference>
<dbReference type="GO" id="GO:0007200">
    <property type="term" value="P:phospholipase C-activating G protein-coupled receptor signaling pathway"/>
    <property type="evidence" value="ECO:0000318"/>
    <property type="project" value="GO_Central"/>
</dbReference>
<dbReference type="GO" id="GO:0045766">
    <property type="term" value="P:positive regulation of angiogenesis"/>
    <property type="evidence" value="ECO:0007669"/>
    <property type="project" value="Ensembl"/>
</dbReference>
<dbReference type="GO" id="GO:0007204">
    <property type="term" value="P:positive regulation of cytosolic calcium ion concentration"/>
    <property type="evidence" value="ECO:0000318"/>
    <property type="project" value="GO_Central"/>
</dbReference>
<dbReference type="GO" id="GO:0010759">
    <property type="term" value="P:positive regulation of macrophage chemotaxis"/>
    <property type="evidence" value="ECO:0007669"/>
    <property type="project" value="Ensembl"/>
</dbReference>
<dbReference type="GO" id="GO:0090023">
    <property type="term" value="P:positive regulation of neutrophil chemotaxis"/>
    <property type="evidence" value="ECO:0007669"/>
    <property type="project" value="Ensembl"/>
</dbReference>
<dbReference type="GO" id="GO:0010575">
    <property type="term" value="P:positive regulation of vascular endothelial growth factor production"/>
    <property type="evidence" value="ECO:0007669"/>
    <property type="project" value="Ensembl"/>
</dbReference>
<dbReference type="CDD" id="cd15115">
    <property type="entry name" value="7tmA_C3aR"/>
    <property type="match status" value="1"/>
</dbReference>
<dbReference type="FunFam" id="1.20.1070.10:FF:000269">
    <property type="entry name" value="C3a anaphylatoxin chemotactic receptor"/>
    <property type="match status" value="1"/>
</dbReference>
<dbReference type="FunFam" id="1.20.1070.10:FF:000284">
    <property type="entry name" value="C3a anaphylatoxin chemotactic receptor"/>
    <property type="match status" value="1"/>
</dbReference>
<dbReference type="Gene3D" id="1.20.1070.10">
    <property type="entry name" value="Rhodopsin 7-helix transmembrane proteins"/>
    <property type="match status" value="2"/>
</dbReference>
<dbReference type="InterPro" id="IPR001644">
    <property type="entry name" value="Anaphtx_C3AR1"/>
</dbReference>
<dbReference type="InterPro" id="IPR002234">
    <property type="entry name" value="Anphylx_rcpt_C3a/C5a1-2"/>
</dbReference>
<dbReference type="InterPro" id="IPR000826">
    <property type="entry name" value="Formyl_rcpt-rel"/>
</dbReference>
<dbReference type="InterPro" id="IPR000276">
    <property type="entry name" value="GPCR_Rhodpsn"/>
</dbReference>
<dbReference type="InterPro" id="IPR017452">
    <property type="entry name" value="GPCR_Rhodpsn_7TM"/>
</dbReference>
<dbReference type="PANTHER" id="PTHR24225:SF28">
    <property type="entry name" value="C3A ANAPHYLATOXIN CHEMOTACTIC RECEPTOR"/>
    <property type="match status" value="1"/>
</dbReference>
<dbReference type="PANTHER" id="PTHR24225">
    <property type="entry name" value="CHEMOTACTIC RECEPTOR"/>
    <property type="match status" value="1"/>
</dbReference>
<dbReference type="Pfam" id="PF00001">
    <property type="entry name" value="7tm_1"/>
    <property type="match status" value="2"/>
</dbReference>
<dbReference type="PRINTS" id="PR01104">
    <property type="entry name" value="ANPHYLATOXNR"/>
</dbReference>
<dbReference type="PRINTS" id="PR01060">
    <property type="entry name" value="C3ANPHYLTXNR"/>
</dbReference>
<dbReference type="PRINTS" id="PR00237">
    <property type="entry name" value="GPCRRHODOPSN"/>
</dbReference>
<dbReference type="SUPFAM" id="SSF81321">
    <property type="entry name" value="Family A G protein-coupled receptor-like"/>
    <property type="match status" value="1"/>
</dbReference>
<dbReference type="PROSITE" id="PS00237">
    <property type="entry name" value="G_PROTEIN_RECEP_F1_1"/>
    <property type="match status" value="1"/>
</dbReference>
<dbReference type="PROSITE" id="PS50262">
    <property type="entry name" value="G_PROTEIN_RECEP_F1_2"/>
    <property type="match status" value="1"/>
</dbReference>
<feature type="chain" id="PRO_0000069202" description="C3a anaphylatoxin chemotactic receptor">
    <location>
        <begin position="1"/>
        <end position="482"/>
    </location>
</feature>
<feature type="topological domain" description="Extracellular" evidence="2">
    <location>
        <begin position="1"/>
        <end position="23"/>
    </location>
</feature>
<feature type="transmembrane region" description="Helical; Name=1" evidence="2">
    <location>
        <begin position="24"/>
        <end position="46"/>
    </location>
</feature>
<feature type="topological domain" description="Cytoplasmic" evidence="2">
    <location>
        <begin position="47"/>
        <end position="57"/>
    </location>
</feature>
<feature type="transmembrane region" description="Helical; Name=2" evidence="2">
    <location>
        <begin position="58"/>
        <end position="80"/>
    </location>
</feature>
<feature type="topological domain" description="Extracellular" evidence="2">
    <location>
        <begin position="81"/>
        <end position="96"/>
    </location>
</feature>
<feature type="transmembrane region" description="Helical; Name=3" evidence="2">
    <location>
        <begin position="97"/>
        <end position="118"/>
    </location>
</feature>
<feature type="topological domain" description="Cytoplasmic" evidence="2">
    <location>
        <begin position="119"/>
        <end position="139"/>
    </location>
</feature>
<feature type="transmembrane region" description="Helical; Name=4" evidence="2">
    <location>
        <begin position="140"/>
        <end position="160"/>
    </location>
</feature>
<feature type="topological domain" description="Extracellular" evidence="2">
    <location>
        <begin position="161"/>
        <end position="340"/>
    </location>
</feature>
<feature type="transmembrane region" description="Helical; Name=5" evidence="2">
    <location>
        <begin position="341"/>
        <end position="360"/>
    </location>
</feature>
<feature type="topological domain" description="Cytoplasmic" evidence="2">
    <location>
        <begin position="361"/>
        <end position="377"/>
    </location>
</feature>
<feature type="transmembrane region" description="Helical; Name=6" evidence="2">
    <location>
        <begin position="378"/>
        <end position="400"/>
    </location>
</feature>
<feature type="topological domain" description="Extracellular" evidence="2">
    <location>
        <begin position="401"/>
        <end position="417"/>
    </location>
</feature>
<feature type="transmembrane region" description="Helical; Name=7" evidence="2">
    <location>
        <begin position="418"/>
        <end position="438"/>
    </location>
</feature>
<feature type="topological domain" description="Cytoplasmic" evidence="2">
    <location>
        <begin position="439"/>
        <end position="482"/>
    </location>
</feature>
<feature type="modified residue" description="Sulfotyrosine" evidence="4">
    <location>
        <position position="174"/>
    </location>
</feature>
<feature type="modified residue" description="Sulfotyrosine" evidence="4">
    <location>
        <position position="184"/>
    </location>
</feature>
<feature type="modified residue" description="Sulfotyrosine" evidence="4">
    <location>
        <position position="318"/>
    </location>
</feature>
<feature type="modified residue" description="Phosphoserine" evidence="1">
    <location>
        <position position="459"/>
    </location>
</feature>
<feature type="modified residue" description="Phosphothreonine" evidence="1">
    <location>
        <position position="463"/>
    </location>
</feature>
<feature type="glycosylation site" description="N-linked (GlcNAc...) asparagine" evidence="2">
    <location>
        <position position="9"/>
    </location>
</feature>
<feature type="glycosylation site" description="N-linked (GlcNAc...) asparagine" evidence="2">
    <location>
        <position position="194"/>
    </location>
</feature>
<feature type="glycosylation site" description="O-linked (GalNAc...) serine" evidence="5">
    <location>
        <position position="266"/>
    </location>
</feature>
<feature type="disulfide bond" evidence="3">
    <location>
        <begin position="95"/>
        <end position="172"/>
    </location>
</feature>
<feature type="sequence variant" id="VAR_019164" description="In dbSNP:rs11567806." evidence="6">
    <original>V</original>
    <variation>A</variation>
    <location>
        <position position="136"/>
    </location>
</feature>
<feature type="sequence conflict" description="In Ref. 4; AAC50657." evidence="7" ref="4">
    <original>F</original>
    <variation>C</variation>
    <location>
        <position position="151"/>
    </location>
</feature>
<feature type="sequence conflict" description="In Ref. 1; AAC50374." evidence="7" ref="1">
    <original>P</original>
    <variation>R</variation>
    <location>
        <position position="203"/>
    </location>
</feature>
<feature type="helix" evidence="9">
    <location>
        <begin position="21"/>
        <end position="50"/>
    </location>
</feature>
<feature type="helix" evidence="9">
    <location>
        <begin position="56"/>
        <end position="73"/>
    </location>
</feature>
<feature type="helix" evidence="9">
    <location>
        <begin position="75"/>
        <end position="83"/>
    </location>
</feature>
<feature type="turn" evidence="9">
    <location>
        <begin position="84"/>
        <end position="86"/>
    </location>
</feature>
<feature type="strand" evidence="9">
    <location>
        <begin position="92"/>
        <end position="94"/>
    </location>
</feature>
<feature type="turn" evidence="9">
    <location>
        <begin position="95"/>
        <end position="97"/>
    </location>
</feature>
<feature type="helix" evidence="9">
    <location>
        <begin position="98"/>
        <end position="113"/>
    </location>
</feature>
<feature type="turn" evidence="9">
    <location>
        <begin position="114"/>
        <end position="117"/>
    </location>
</feature>
<feature type="helix" evidence="9">
    <location>
        <begin position="118"/>
        <end position="125"/>
    </location>
</feature>
<feature type="helix" evidence="9">
    <location>
        <begin position="127"/>
        <end position="133"/>
    </location>
</feature>
<feature type="helix" evidence="9">
    <location>
        <begin position="136"/>
        <end position="152"/>
    </location>
</feature>
<feature type="helix" evidence="9">
    <location>
        <begin position="155"/>
        <end position="160"/>
    </location>
</feature>
<feature type="strand" evidence="9">
    <location>
        <begin position="164"/>
        <end position="166"/>
    </location>
</feature>
<feature type="strand" evidence="9">
    <location>
        <begin position="169"/>
        <end position="171"/>
    </location>
</feature>
<feature type="helix" evidence="9">
    <location>
        <begin position="331"/>
        <end position="342"/>
    </location>
</feature>
<feature type="turn" evidence="9">
    <location>
        <begin position="343"/>
        <end position="345"/>
    </location>
</feature>
<feature type="helix" evidence="9">
    <location>
        <begin position="346"/>
        <end position="362"/>
    </location>
</feature>
<feature type="strand" evidence="8">
    <location>
        <begin position="364"/>
        <end position="367"/>
    </location>
</feature>
<feature type="strand" evidence="8">
    <location>
        <begin position="369"/>
        <end position="373"/>
    </location>
</feature>
<feature type="helix" evidence="9">
    <location>
        <begin position="374"/>
        <end position="378"/>
    </location>
</feature>
<feature type="helix" evidence="9">
    <location>
        <begin position="385"/>
        <end position="389"/>
    </location>
</feature>
<feature type="helix" evidence="9">
    <location>
        <begin position="391"/>
        <end position="395"/>
    </location>
</feature>
<feature type="turn" evidence="9">
    <location>
        <begin position="396"/>
        <end position="400"/>
    </location>
</feature>
<feature type="strand" evidence="9">
    <location>
        <begin position="401"/>
        <end position="403"/>
    </location>
</feature>
<feature type="strand" evidence="8">
    <location>
        <begin position="405"/>
        <end position="407"/>
    </location>
</feature>
<feature type="helix" evidence="9">
    <location>
        <begin position="408"/>
        <end position="415"/>
    </location>
</feature>
<feature type="helix" evidence="9">
    <location>
        <begin position="417"/>
        <end position="426"/>
    </location>
</feature>
<feature type="helix" evidence="9">
    <location>
        <begin position="427"/>
        <end position="429"/>
    </location>
</feature>
<feature type="helix" evidence="9">
    <location>
        <begin position="431"/>
        <end position="434"/>
    </location>
</feature>
<feature type="turn" evidence="9">
    <location>
        <begin position="435"/>
        <end position="438"/>
    </location>
</feature>
<feature type="helix" evidence="9">
    <location>
        <begin position="441"/>
        <end position="453"/>
    </location>
</feature>
<sequence>MASFSAETNSTDLLSQPWNEPPVILSMVILSLTFLLGLPGNGLVLWVAGLKMQRTVNTIWFLHLTLADLLCCLSLPFSLAHLALQGQWPYGRFLCKLIPSIIVLNMFASVFLLTAISLDRCLVVFKPIWCQNHRNVGMACSICGCIWVVAFVMCIPVFVYREIFTTDNHNRCGYKFGLSSSLDYPDFYGDPLENRSLENIVQPPGEMNDRLDPSSFQTNDHPWTVPTVFQPQTFQRPSADSLPRGSARLTSQNLYSNVFKPADVVSPKIPSGFPIEDHETSPLDNSDAFLSTHLKLFPSASSNSFYESELPQGFQDYYNLGQFTDDDQVPTPLVAITITRLVVGFLLPSVIMIACYSFIVFRMQRGRFAKSQSKTFRVAVVVVAVFLVCWTPYHIFGVLSLLTDPETPLGKTLMSWDHVCIALASANSCFNPFLYALLGKDFRKKARQSIQGILEAAFSEELTRSTHCPSNNVISERNSTTV</sequence>
<gene>
    <name type="primary">C3AR1</name>
    <name type="synonym">AZ3B</name>
    <name type="synonym">C3R1</name>
    <name type="synonym">HNFAG09</name>
</gene>
<proteinExistence type="evidence at protein level"/>
<comment type="function">
    <text>Receptor for the chemotactic and inflammatory peptide anaphylatoxin C3a. This receptor stimulates chemotaxis, granule enzyme release and superoxide anion production.</text>
</comment>
<comment type="subunit">
    <text evidence="1">Interacts with VGF-derived peptide TLQP-21 (By similarity).</text>
</comment>
<comment type="subcellular location">
    <subcellularLocation>
        <location>Cell membrane</location>
        <topology>Multi-pass membrane protein</topology>
    </subcellularLocation>
</comment>
<comment type="tissue specificity">
    <text>Widely expressed in several differentiated hematopoietic cell lines, in the lung, spleen, ovary, placenta, small intestine, throughout the brain, heart, and endothelial cells. Mostly expressed in lymphoid tissues.</text>
</comment>
<comment type="PTM">
    <text evidence="4">Among the sulfation sites Tyr-174 is essential for binding of C3a anaphylatoxin.</text>
</comment>
<comment type="PTM">
    <text evidence="5">O-glycosylated.</text>
</comment>
<comment type="similarity">
    <text evidence="3">Belongs to the G-protein coupled receptor 1 family.</text>
</comment>
<keyword id="KW-0002">3D-structure</keyword>
<keyword id="KW-1003">Cell membrane</keyword>
<keyword id="KW-0145">Chemotaxis</keyword>
<keyword id="KW-1015">Disulfide bond</keyword>
<keyword id="KW-0297">G-protein coupled receptor</keyword>
<keyword id="KW-0325">Glycoprotein</keyword>
<keyword id="KW-0472">Membrane</keyword>
<keyword id="KW-0597">Phosphoprotein</keyword>
<keyword id="KW-1267">Proteomics identification</keyword>
<keyword id="KW-0675">Receptor</keyword>
<keyword id="KW-1185">Reference proteome</keyword>
<keyword id="KW-0765">Sulfation</keyword>
<keyword id="KW-0807">Transducer</keyword>
<keyword id="KW-0812">Transmembrane</keyword>
<keyword id="KW-1133">Transmembrane helix</keyword>
<reference key="1">
    <citation type="journal article" date="1996" name="Biochim. Biophys. Acta">
        <title>cDNA cloning of a novel G protein-coupled receptor with a large extracellular loop structure.</title>
        <authorList>
            <person name="Roglic A."/>
            <person name="Prossnitz E.R."/>
            <person name="Cavanagh S.L."/>
            <person name="Pan Z."/>
            <person name="Zou A."/>
            <person name="Ye R.D."/>
        </authorList>
    </citation>
    <scope>NUCLEOTIDE SEQUENCE [MRNA]</scope>
</reference>
<reference key="2">
    <citation type="journal article" date="1996" name="Eur. J. Immunol.">
        <title>Expression cloning of the human C3a anaphylatoxin receptor (C3aR) from differentiated U-937 cells.</title>
        <authorList>
            <person name="Crass T."/>
            <person name="Raffetseder U."/>
            <person name="Martin U."/>
            <person name="Grove M."/>
            <person name="Klos A."/>
            <person name="Koehl J."/>
            <person name="Bautsch W."/>
        </authorList>
    </citation>
    <scope>NUCLEOTIDE SEQUENCE [MRNA]</scope>
</reference>
<reference key="3">
    <citation type="submission" date="1998-01" db="EMBL/GenBank/DDBJ databases">
        <authorList>
            <person name="Bautsch W."/>
        </authorList>
    </citation>
    <scope>SEQUENCE REVISION</scope>
</reference>
<reference key="4">
    <citation type="journal article" date="1996" name="J. Biol. Chem.">
        <title>Molecular cloning and characterization of the human anaphylatoxin C3a receptor.</title>
        <authorList>
            <person name="Ames R.S."/>
            <person name="Li Y."/>
            <person name="Sarau H.M."/>
            <person name="Nuthulaganti P."/>
            <person name="Foley J.J."/>
            <person name="Ellis C."/>
            <person name="Zeng Z."/>
            <person name="Su K."/>
            <person name="Jurewicz A.J."/>
            <person name="Hertzberg R.P."/>
            <person name="Bergsma D.J."/>
            <person name="Kumar C."/>
        </authorList>
    </citation>
    <scope>NUCLEOTIDE SEQUENCE [MRNA]</scope>
</reference>
<reference key="5">
    <citation type="submission" date="2001-07" db="EMBL/GenBank/DDBJ databases">
        <title>Genome-wide discovery and analysis of human seven transmembrane helix receptor genes.</title>
        <authorList>
            <person name="Suwa M."/>
            <person name="Sato T."/>
            <person name="Okouchi I."/>
            <person name="Arita M."/>
            <person name="Futami K."/>
            <person name="Matsumoto S."/>
            <person name="Tsutsumi S."/>
            <person name="Aburatani H."/>
            <person name="Asai K."/>
            <person name="Akiyama Y."/>
        </authorList>
    </citation>
    <scope>NUCLEOTIDE SEQUENCE [GENOMIC DNA]</scope>
</reference>
<reference key="6">
    <citation type="submission" date="2003-04" db="EMBL/GenBank/DDBJ databases">
        <title>cDNA clones of human proteins involved in signal transduction sequenced by the Guthrie cDNA resource center (www.cdna.org).</title>
        <authorList>
            <person name="Kopatz S.A."/>
            <person name="Aronstam R.S."/>
            <person name="Sharma S.V."/>
        </authorList>
    </citation>
    <scope>NUCLEOTIDE SEQUENCE [LARGE SCALE MRNA]</scope>
</reference>
<reference key="7">
    <citation type="submission" date="2003-10" db="EMBL/GenBank/DDBJ databases">
        <authorList>
            <consortium name="SeattleSNPs variation discovery resource"/>
        </authorList>
    </citation>
    <scope>NUCLEOTIDE SEQUENCE [GENOMIC DNA]</scope>
    <scope>VARIANT ALA-136</scope>
</reference>
<reference key="8">
    <citation type="journal article" date="2004" name="Genome Res.">
        <title>The status, quality, and expansion of the NIH full-length cDNA project: the Mammalian Gene Collection (MGC).</title>
        <authorList>
            <consortium name="The MGC Project Team"/>
        </authorList>
    </citation>
    <scope>NUCLEOTIDE SEQUENCE [LARGE SCALE MRNA]</scope>
    <source>
        <tissue>Lung</tissue>
    </source>
</reference>
<reference key="9">
    <citation type="journal article" date="2003" name="J. Biol. Chem.">
        <title>Sulfation of tyrosine 174 in the human C3a receptor is essential for binding of C3a anaphylatoxin.</title>
        <authorList>
            <person name="Gao J."/>
            <person name="Choe H."/>
            <person name="Bota D."/>
            <person name="Wright P.L."/>
            <person name="Gerard C."/>
            <person name="Gerard N.P."/>
        </authorList>
    </citation>
    <scope>SULFATION AT TYR-174; TYR-184 AND TYR-318</scope>
</reference>
<reference key="10">
    <citation type="journal article" date="2013" name="J. Proteome Res.">
        <title>LC-MS/MS characterization of O-glycosylation sites and glycan structures of human cerebrospinal fluid glycoproteins.</title>
        <authorList>
            <person name="Halim A."/>
            <person name="Ruetschi U."/>
            <person name="Larson G."/>
            <person name="Nilsson J."/>
        </authorList>
    </citation>
    <scope>GLYCOSYLATION AT SER-266</scope>
    <scope>IDENTIFICATION BY MASS SPECTROMETRY</scope>
</reference>
<accession>Q16581</accession>
<accession>O43771</accession>
<accession>Q92868</accession>
<protein>
    <recommendedName>
        <fullName>C3a anaphylatoxin chemotactic receptor</fullName>
        <shortName>C3AR</shortName>
        <shortName>C3a-R</shortName>
    </recommendedName>
</protein>
<name>C3AR_HUMAN</name>
<evidence type="ECO:0000250" key="1">
    <source>
        <dbReference type="UniProtKB" id="O09047"/>
    </source>
</evidence>
<evidence type="ECO:0000255" key="2"/>
<evidence type="ECO:0000255" key="3">
    <source>
        <dbReference type="PROSITE-ProRule" id="PRU00521"/>
    </source>
</evidence>
<evidence type="ECO:0000269" key="4">
    <source>
    </source>
</evidence>
<evidence type="ECO:0000269" key="5">
    <source>
    </source>
</evidence>
<evidence type="ECO:0000269" key="6">
    <source ref="7"/>
</evidence>
<evidence type="ECO:0000305" key="7"/>
<evidence type="ECO:0007829" key="8">
    <source>
        <dbReference type="PDB" id="8I95"/>
    </source>
</evidence>
<evidence type="ECO:0007829" key="9">
    <source>
        <dbReference type="PDB" id="8IA8"/>
    </source>
</evidence>